<organism>
    <name type="scientific">Mus musculus</name>
    <name type="common">Mouse</name>
    <dbReference type="NCBI Taxonomy" id="10090"/>
    <lineage>
        <taxon>Eukaryota</taxon>
        <taxon>Metazoa</taxon>
        <taxon>Chordata</taxon>
        <taxon>Craniata</taxon>
        <taxon>Vertebrata</taxon>
        <taxon>Euteleostomi</taxon>
        <taxon>Mammalia</taxon>
        <taxon>Eutheria</taxon>
        <taxon>Euarchontoglires</taxon>
        <taxon>Glires</taxon>
        <taxon>Rodentia</taxon>
        <taxon>Myomorpha</taxon>
        <taxon>Muroidea</taxon>
        <taxon>Muridae</taxon>
        <taxon>Murinae</taxon>
        <taxon>Mus</taxon>
        <taxon>Mus</taxon>
    </lineage>
</organism>
<protein>
    <recommendedName>
        <fullName evidence="3">Pyridine nucleotide-disulfide oxidoreductase domain-containing protein 2</fullName>
        <ecNumber>1.-.-.-</ecNumber>
    </recommendedName>
</protein>
<proteinExistence type="evidence at protein level"/>
<gene>
    <name evidence="4" type="primary">Pyroxd2</name>
</gene>
<evidence type="ECO:0000250" key="1">
    <source>
        <dbReference type="UniProtKB" id="Q8N2H3"/>
    </source>
</evidence>
<evidence type="ECO:0000255" key="2"/>
<evidence type="ECO:0000305" key="3"/>
<evidence type="ECO:0000312" key="4">
    <source>
        <dbReference type="MGI" id="MGI:1921830"/>
    </source>
</evidence>
<reference key="1">
    <citation type="journal article" date="2005" name="Science">
        <title>The transcriptional landscape of the mammalian genome.</title>
        <authorList>
            <person name="Carninci P."/>
            <person name="Kasukawa T."/>
            <person name="Katayama S."/>
            <person name="Gough J."/>
            <person name="Frith M.C."/>
            <person name="Maeda N."/>
            <person name="Oyama R."/>
            <person name="Ravasi T."/>
            <person name="Lenhard B."/>
            <person name="Wells C."/>
            <person name="Kodzius R."/>
            <person name="Shimokawa K."/>
            <person name="Bajic V.B."/>
            <person name="Brenner S.E."/>
            <person name="Batalov S."/>
            <person name="Forrest A.R."/>
            <person name="Zavolan M."/>
            <person name="Davis M.J."/>
            <person name="Wilming L.G."/>
            <person name="Aidinis V."/>
            <person name="Allen J.E."/>
            <person name="Ambesi-Impiombato A."/>
            <person name="Apweiler R."/>
            <person name="Aturaliya R.N."/>
            <person name="Bailey T.L."/>
            <person name="Bansal M."/>
            <person name="Baxter L."/>
            <person name="Beisel K.W."/>
            <person name="Bersano T."/>
            <person name="Bono H."/>
            <person name="Chalk A.M."/>
            <person name="Chiu K.P."/>
            <person name="Choudhary V."/>
            <person name="Christoffels A."/>
            <person name="Clutterbuck D.R."/>
            <person name="Crowe M.L."/>
            <person name="Dalla E."/>
            <person name="Dalrymple B.P."/>
            <person name="de Bono B."/>
            <person name="Della Gatta G."/>
            <person name="di Bernardo D."/>
            <person name="Down T."/>
            <person name="Engstrom P."/>
            <person name="Fagiolini M."/>
            <person name="Faulkner G."/>
            <person name="Fletcher C.F."/>
            <person name="Fukushima T."/>
            <person name="Furuno M."/>
            <person name="Futaki S."/>
            <person name="Gariboldi M."/>
            <person name="Georgii-Hemming P."/>
            <person name="Gingeras T.R."/>
            <person name="Gojobori T."/>
            <person name="Green R.E."/>
            <person name="Gustincich S."/>
            <person name="Harbers M."/>
            <person name="Hayashi Y."/>
            <person name="Hensch T.K."/>
            <person name="Hirokawa N."/>
            <person name="Hill D."/>
            <person name="Huminiecki L."/>
            <person name="Iacono M."/>
            <person name="Ikeo K."/>
            <person name="Iwama A."/>
            <person name="Ishikawa T."/>
            <person name="Jakt M."/>
            <person name="Kanapin A."/>
            <person name="Katoh M."/>
            <person name="Kawasawa Y."/>
            <person name="Kelso J."/>
            <person name="Kitamura H."/>
            <person name="Kitano H."/>
            <person name="Kollias G."/>
            <person name="Krishnan S.P."/>
            <person name="Kruger A."/>
            <person name="Kummerfeld S.K."/>
            <person name="Kurochkin I.V."/>
            <person name="Lareau L.F."/>
            <person name="Lazarevic D."/>
            <person name="Lipovich L."/>
            <person name="Liu J."/>
            <person name="Liuni S."/>
            <person name="McWilliam S."/>
            <person name="Madan Babu M."/>
            <person name="Madera M."/>
            <person name="Marchionni L."/>
            <person name="Matsuda H."/>
            <person name="Matsuzawa S."/>
            <person name="Miki H."/>
            <person name="Mignone F."/>
            <person name="Miyake S."/>
            <person name="Morris K."/>
            <person name="Mottagui-Tabar S."/>
            <person name="Mulder N."/>
            <person name="Nakano N."/>
            <person name="Nakauchi H."/>
            <person name="Ng P."/>
            <person name="Nilsson R."/>
            <person name="Nishiguchi S."/>
            <person name="Nishikawa S."/>
            <person name="Nori F."/>
            <person name="Ohara O."/>
            <person name="Okazaki Y."/>
            <person name="Orlando V."/>
            <person name="Pang K.C."/>
            <person name="Pavan W.J."/>
            <person name="Pavesi G."/>
            <person name="Pesole G."/>
            <person name="Petrovsky N."/>
            <person name="Piazza S."/>
            <person name="Reed J."/>
            <person name="Reid J.F."/>
            <person name="Ring B.Z."/>
            <person name="Ringwald M."/>
            <person name="Rost B."/>
            <person name="Ruan Y."/>
            <person name="Salzberg S.L."/>
            <person name="Sandelin A."/>
            <person name="Schneider C."/>
            <person name="Schoenbach C."/>
            <person name="Sekiguchi K."/>
            <person name="Semple C.A."/>
            <person name="Seno S."/>
            <person name="Sessa L."/>
            <person name="Sheng Y."/>
            <person name="Shibata Y."/>
            <person name="Shimada H."/>
            <person name="Shimada K."/>
            <person name="Silva D."/>
            <person name="Sinclair B."/>
            <person name="Sperling S."/>
            <person name="Stupka E."/>
            <person name="Sugiura K."/>
            <person name="Sultana R."/>
            <person name="Takenaka Y."/>
            <person name="Taki K."/>
            <person name="Tammoja K."/>
            <person name="Tan S.L."/>
            <person name="Tang S."/>
            <person name="Taylor M.S."/>
            <person name="Tegner J."/>
            <person name="Teichmann S.A."/>
            <person name="Ueda H.R."/>
            <person name="van Nimwegen E."/>
            <person name="Verardo R."/>
            <person name="Wei C.L."/>
            <person name="Yagi K."/>
            <person name="Yamanishi H."/>
            <person name="Zabarovsky E."/>
            <person name="Zhu S."/>
            <person name="Zimmer A."/>
            <person name="Hide W."/>
            <person name="Bult C."/>
            <person name="Grimmond S.M."/>
            <person name="Teasdale R.D."/>
            <person name="Liu E.T."/>
            <person name="Brusic V."/>
            <person name="Quackenbush J."/>
            <person name="Wahlestedt C."/>
            <person name="Mattick J.S."/>
            <person name="Hume D.A."/>
            <person name="Kai C."/>
            <person name="Sasaki D."/>
            <person name="Tomaru Y."/>
            <person name="Fukuda S."/>
            <person name="Kanamori-Katayama M."/>
            <person name="Suzuki M."/>
            <person name="Aoki J."/>
            <person name="Arakawa T."/>
            <person name="Iida J."/>
            <person name="Imamura K."/>
            <person name="Itoh M."/>
            <person name="Kato T."/>
            <person name="Kawaji H."/>
            <person name="Kawagashira N."/>
            <person name="Kawashima T."/>
            <person name="Kojima M."/>
            <person name="Kondo S."/>
            <person name="Konno H."/>
            <person name="Nakano K."/>
            <person name="Ninomiya N."/>
            <person name="Nishio T."/>
            <person name="Okada M."/>
            <person name="Plessy C."/>
            <person name="Shibata K."/>
            <person name="Shiraki T."/>
            <person name="Suzuki S."/>
            <person name="Tagami M."/>
            <person name="Waki K."/>
            <person name="Watahiki A."/>
            <person name="Okamura-Oho Y."/>
            <person name="Suzuki H."/>
            <person name="Kawai J."/>
            <person name="Hayashizaki Y."/>
        </authorList>
    </citation>
    <scope>NUCLEOTIDE SEQUENCE [LARGE SCALE MRNA]</scope>
    <source>
        <strain>C57BL/6J</strain>
        <strain>NOD</strain>
        <tissue>Head</tissue>
        <tissue>Hypothalamus</tissue>
    </source>
</reference>
<reference key="2">
    <citation type="journal article" date="2009" name="PLoS Biol.">
        <title>Lineage-specific biology revealed by a finished genome assembly of the mouse.</title>
        <authorList>
            <person name="Church D.M."/>
            <person name="Goodstadt L."/>
            <person name="Hillier L.W."/>
            <person name="Zody M.C."/>
            <person name="Goldstein S."/>
            <person name="She X."/>
            <person name="Bult C.J."/>
            <person name="Agarwala R."/>
            <person name="Cherry J.L."/>
            <person name="DiCuccio M."/>
            <person name="Hlavina W."/>
            <person name="Kapustin Y."/>
            <person name="Meric P."/>
            <person name="Maglott D."/>
            <person name="Birtle Z."/>
            <person name="Marques A.C."/>
            <person name="Graves T."/>
            <person name="Zhou S."/>
            <person name="Teague B."/>
            <person name="Potamousis K."/>
            <person name="Churas C."/>
            <person name="Place M."/>
            <person name="Herschleb J."/>
            <person name="Runnheim R."/>
            <person name="Forrest D."/>
            <person name="Amos-Landgraf J."/>
            <person name="Schwartz D.C."/>
            <person name="Cheng Z."/>
            <person name="Lindblad-Toh K."/>
            <person name="Eichler E.E."/>
            <person name="Ponting C.P."/>
        </authorList>
    </citation>
    <scope>NUCLEOTIDE SEQUENCE [LARGE SCALE GENOMIC DNA]</scope>
    <source>
        <strain>C57BL/6J</strain>
    </source>
</reference>
<reference key="3">
    <citation type="journal article" date="2010" name="Cell">
        <title>A tissue-specific atlas of mouse protein phosphorylation and expression.</title>
        <authorList>
            <person name="Huttlin E.L."/>
            <person name="Jedrychowski M.P."/>
            <person name="Elias J.E."/>
            <person name="Goswami T."/>
            <person name="Rad R."/>
            <person name="Beausoleil S.A."/>
            <person name="Villen J."/>
            <person name="Haas W."/>
            <person name="Sowa M.E."/>
            <person name="Gygi S.P."/>
        </authorList>
    </citation>
    <scope>IDENTIFICATION BY MASS SPECTROMETRY [LARGE SCALE ANALYSIS]</scope>
    <source>
        <tissue>Brain</tissue>
        <tissue>Brown adipose tissue</tissue>
        <tissue>Kidney</tissue>
        <tissue>Liver</tissue>
        <tissue>Testis</tissue>
    </source>
</reference>
<name>PYRD2_MOUSE</name>
<feature type="chain" id="PRO_0000244072" description="Pyridine nucleotide-disulfide oxidoreductase domain-containing protein 2">
    <location>
        <begin position="1"/>
        <end position="581"/>
    </location>
</feature>
<feature type="binding site" evidence="2">
    <location>
        <begin position="38"/>
        <end position="71"/>
    </location>
    <ligand>
        <name>FAD</name>
        <dbReference type="ChEBI" id="CHEBI:57692"/>
    </ligand>
</feature>
<feature type="sequence conflict" description="In Ref. 1; BAE32444." evidence="3" ref="1">
    <original>T</original>
    <variation>A</variation>
    <location>
        <position position="19"/>
    </location>
</feature>
<feature type="sequence conflict" description="In Ref. 1; BAB29495." evidence="3" ref="1">
    <original>A</original>
    <variation>R</variation>
    <location>
        <position position="73"/>
    </location>
</feature>
<feature type="sequence conflict" description="In Ref. 1; BAC29991." evidence="3" ref="1">
    <original>KHGLKLHLRD</original>
    <variation>VDRLAWPGGW</variation>
    <location>
        <begin position="106"/>
        <end position="115"/>
    </location>
</feature>
<comment type="function">
    <text evidence="1">Probable oxidoreductase that may play a role as regulator of mitochondrial function.</text>
</comment>
<comment type="subunit">
    <text evidence="1">Interacts with COX5B; this interaction may contribute to localize PYROXD2 to the inner face of the inner mitochondrial membrane.</text>
</comment>
<comment type="subcellular location">
    <subcellularLocation>
        <location evidence="1">Mitochondrion matrix</location>
    </subcellularLocation>
    <text evidence="1">The import into mitochondria is dependent on TOMM40 and TIMM23.</text>
</comment>
<comment type="similarity">
    <text evidence="3">Belongs to the carotenoid/retinoid oxidoreductase family.</text>
</comment>
<comment type="sequence caution" evidence="3">
    <conflict type="miscellaneous discrepancy">
        <sequence resource="EMBL-CDS" id="BAE32444"/>
    </conflict>
    <text>Intron retention between positions 50 and 165.</text>
</comment>
<dbReference type="EC" id="1.-.-.-"/>
<dbReference type="EMBL" id="AK014668">
    <property type="protein sequence ID" value="BAB29495.1"/>
    <property type="molecule type" value="mRNA"/>
</dbReference>
<dbReference type="EMBL" id="AK038414">
    <property type="protein sequence ID" value="BAC29991.1"/>
    <property type="molecule type" value="mRNA"/>
</dbReference>
<dbReference type="EMBL" id="AK154222">
    <property type="protein sequence ID" value="BAE32444.1"/>
    <property type="status" value="ALT_SEQ"/>
    <property type="molecule type" value="mRNA"/>
</dbReference>
<dbReference type="EMBL" id="AC125458">
    <property type="status" value="NOT_ANNOTATED_CDS"/>
    <property type="molecule type" value="Genomic_DNA"/>
</dbReference>
<dbReference type="CCDS" id="CCDS37991.1"/>
<dbReference type="RefSeq" id="NP_083287.2">
    <property type="nucleotide sequence ID" value="NM_029011.2"/>
</dbReference>
<dbReference type="SMR" id="Q3U4I7"/>
<dbReference type="FunCoup" id="Q3U4I7">
    <property type="interactions" value="315"/>
</dbReference>
<dbReference type="STRING" id="10090.ENSMUSP00000075825"/>
<dbReference type="iPTMnet" id="Q3U4I7"/>
<dbReference type="PhosphoSitePlus" id="Q3U4I7"/>
<dbReference type="jPOST" id="Q3U4I7"/>
<dbReference type="PaxDb" id="10090-ENSMUSP00000075825"/>
<dbReference type="PeptideAtlas" id="Q3U4I7"/>
<dbReference type="ProteomicsDB" id="300296"/>
<dbReference type="Pumba" id="Q3U4I7"/>
<dbReference type="Antibodypedia" id="31034">
    <property type="antibodies" value="91 antibodies from 18 providers"/>
</dbReference>
<dbReference type="Ensembl" id="ENSMUST00000076505.4">
    <property type="protein sequence ID" value="ENSMUSP00000075825.4"/>
    <property type="gene ID" value="ENSMUSG00000060224.5"/>
</dbReference>
<dbReference type="GeneID" id="74580"/>
<dbReference type="KEGG" id="mmu:74580"/>
<dbReference type="UCSC" id="uc008hnu.1">
    <property type="organism name" value="mouse"/>
</dbReference>
<dbReference type="AGR" id="MGI:1921830"/>
<dbReference type="CTD" id="84795"/>
<dbReference type="MGI" id="MGI:1921830">
    <property type="gene designation" value="Pyroxd2"/>
</dbReference>
<dbReference type="VEuPathDB" id="HostDB:ENSMUSG00000060224"/>
<dbReference type="eggNOG" id="KOG4254">
    <property type="taxonomic scope" value="Eukaryota"/>
</dbReference>
<dbReference type="GeneTree" id="ENSGT00390000011684"/>
<dbReference type="HOGENOM" id="CLU_019327_0_0_1"/>
<dbReference type="InParanoid" id="Q3U4I7"/>
<dbReference type="OMA" id="GLYHCGS"/>
<dbReference type="PhylomeDB" id="Q3U4I7"/>
<dbReference type="TreeFam" id="TF315188"/>
<dbReference type="BioGRID-ORCS" id="74580">
    <property type="hits" value="4 hits in 74 CRISPR screens"/>
</dbReference>
<dbReference type="PRO" id="PR:Q3U4I7"/>
<dbReference type="Proteomes" id="UP000000589">
    <property type="component" value="Chromosome 19"/>
</dbReference>
<dbReference type="RNAct" id="Q3U4I7">
    <property type="molecule type" value="protein"/>
</dbReference>
<dbReference type="Bgee" id="ENSMUSG00000060224">
    <property type="expression patterns" value="Expressed in right kidney and 153 other cell types or tissues"/>
</dbReference>
<dbReference type="ExpressionAtlas" id="Q3U4I7">
    <property type="expression patterns" value="baseline and differential"/>
</dbReference>
<dbReference type="GO" id="GO:0005759">
    <property type="term" value="C:mitochondrial matrix"/>
    <property type="evidence" value="ECO:0000250"/>
    <property type="project" value="UniProtKB"/>
</dbReference>
<dbReference type="GO" id="GO:0016491">
    <property type="term" value="F:oxidoreductase activity"/>
    <property type="evidence" value="ECO:0007669"/>
    <property type="project" value="UniProtKB-KW"/>
</dbReference>
<dbReference type="GO" id="GO:0007005">
    <property type="term" value="P:mitochondrion organization"/>
    <property type="evidence" value="ECO:0000250"/>
    <property type="project" value="UniProtKB"/>
</dbReference>
<dbReference type="Gene3D" id="3.50.50.60">
    <property type="entry name" value="FAD/NAD(P)-binding domain"/>
    <property type="match status" value="2"/>
</dbReference>
<dbReference type="InterPro" id="IPR002937">
    <property type="entry name" value="Amino_oxidase"/>
</dbReference>
<dbReference type="InterPro" id="IPR036188">
    <property type="entry name" value="FAD/NAD-bd_sf"/>
</dbReference>
<dbReference type="PANTHER" id="PTHR10668">
    <property type="entry name" value="PHYTOENE DEHYDROGENASE"/>
    <property type="match status" value="1"/>
</dbReference>
<dbReference type="PANTHER" id="PTHR10668:SF103">
    <property type="entry name" value="PYRIDINE NUCLEOTIDE-DISULFIDE OXIDOREDUCTASE DOMAIN-CONTAINING PROTEIN 2"/>
    <property type="match status" value="1"/>
</dbReference>
<dbReference type="Pfam" id="PF01593">
    <property type="entry name" value="Amino_oxidase"/>
    <property type="match status" value="1"/>
</dbReference>
<dbReference type="SUPFAM" id="SSF51905">
    <property type="entry name" value="FAD/NAD(P)-binding domain"/>
    <property type="match status" value="1"/>
</dbReference>
<keyword id="KW-0274">FAD</keyword>
<keyword id="KW-0285">Flavoprotein</keyword>
<keyword id="KW-0496">Mitochondrion</keyword>
<keyword id="KW-0560">Oxidoreductase</keyword>
<keyword id="KW-1185">Reference proteome</keyword>
<sequence>MAAGGRGLIRALHSSPCPTWKRAQSGANGRLKPEYDAVVIGAGHNGLVAAAYLQRLGVNTAVFERRHVIGGAAVTEEIIPGFKFSRASYLLSLLRPQICTDLELKKHGLKLHLRDPYSFTPMLEEGTLNRLPRSLLLGTDMAANQKEISQFSRKDAQAFPRYEEFMKRLVLAIDPLLDAAPVDTTAFQHGSLLQRLRALSTLKPLLKAGRTLGAQLPQYYEVLTAPISKVLDQRFESEPLKATLATDAVIGAMTSPHTPGSGYVLLHHVMGSLEGTQGAWSYVQGGMGALSDAIASSAATRGASIFTEKTVAKVQVNSEGRAQGVTLQDGEEVRSRVVLSCASPQVTFLELTPQEWLPGAFVKRISQLDTQSPVTKINVAVDRLPNFQAAPNAPGDQPQGHHQCSIHLNCEDTLLLHQAFEDAKGGLPSQKPMIELCIPSSLDPTLAPPGCHVVSLFTQYTPYTLAGGKVWNEQEKNTYADKVFDCIEAYAPGFKRSVLARDILTPPDLERIFRLPGGNIFHGAMSLDQLYFARPVPQHSDYRCPVQGLYLCGSGAHPGGGVMGAAGRNAAHVVFRDLKNM</sequence>
<accession>Q3U4I7</accession>
<accession>E9QPD2</accession>
<accession>Q8CAN2</accession>
<accession>Q9D630</accession>